<reference key="1">
    <citation type="journal article" date="2002" name="Nature">
        <title>Complete genome sequence of the model actinomycete Streptomyces coelicolor A3(2).</title>
        <authorList>
            <person name="Bentley S.D."/>
            <person name="Chater K.F."/>
            <person name="Cerdeno-Tarraga A.-M."/>
            <person name="Challis G.L."/>
            <person name="Thomson N.R."/>
            <person name="James K.D."/>
            <person name="Harris D.E."/>
            <person name="Quail M.A."/>
            <person name="Kieser H."/>
            <person name="Harper D."/>
            <person name="Bateman A."/>
            <person name="Brown S."/>
            <person name="Chandra G."/>
            <person name="Chen C.W."/>
            <person name="Collins M."/>
            <person name="Cronin A."/>
            <person name="Fraser A."/>
            <person name="Goble A."/>
            <person name="Hidalgo J."/>
            <person name="Hornsby T."/>
            <person name="Howarth S."/>
            <person name="Huang C.-H."/>
            <person name="Kieser T."/>
            <person name="Larke L."/>
            <person name="Murphy L.D."/>
            <person name="Oliver K."/>
            <person name="O'Neil S."/>
            <person name="Rabbinowitsch E."/>
            <person name="Rajandream M.A."/>
            <person name="Rutherford K.M."/>
            <person name="Rutter S."/>
            <person name="Seeger K."/>
            <person name="Saunders D."/>
            <person name="Sharp S."/>
            <person name="Squares R."/>
            <person name="Squares S."/>
            <person name="Taylor K."/>
            <person name="Warren T."/>
            <person name="Wietzorrek A."/>
            <person name="Woodward J.R."/>
            <person name="Barrell B.G."/>
            <person name="Parkhill J."/>
            <person name="Hopwood D.A."/>
        </authorList>
    </citation>
    <scope>NUCLEOTIDE SEQUENCE [LARGE SCALE GENOMIC DNA]</scope>
    <source>
        <strain>ATCC BAA-471 / A3(2) / M145</strain>
    </source>
</reference>
<feature type="chain" id="PRO_0000174598" description="S-adenosylmethionine synthase">
    <location>
        <begin position="1"/>
        <end position="402"/>
    </location>
</feature>
<feature type="region of interest" description="Flexible loop" evidence="1">
    <location>
        <begin position="99"/>
        <end position="109"/>
    </location>
</feature>
<feature type="binding site" description="in other chain" evidence="1">
    <location>
        <position position="15"/>
    </location>
    <ligand>
        <name>ATP</name>
        <dbReference type="ChEBI" id="CHEBI:30616"/>
        <note>ligand shared between two neighboring subunits</note>
    </ligand>
</feature>
<feature type="binding site" evidence="1">
    <location>
        <position position="17"/>
    </location>
    <ligand>
        <name>Mg(2+)</name>
        <dbReference type="ChEBI" id="CHEBI:18420"/>
    </ligand>
</feature>
<feature type="binding site" evidence="1">
    <location>
        <position position="43"/>
    </location>
    <ligand>
        <name>K(+)</name>
        <dbReference type="ChEBI" id="CHEBI:29103"/>
    </ligand>
</feature>
<feature type="binding site" description="in other chain" evidence="1">
    <location>
        <position position="56"/>
    </location>
    <ligand>
        <name>L-methionine</name>
        <dbReference type="ChEBI" id="CHEBI:57844"/>
        <note>ligand shared between two neighboring subunits</note>
    </ligand>
</feature>
<feature type="binding site" description="in other chain" evidence="1">
    <location>
        <position position="99"/>
    </location>
    <ligand>
        <name>L-methionine</name>
        <dbReference type="ChEBI" id="CHEBI:57844"/>
        <note>ligand shared between two neighboring subunits</note>
    </ligand>
</feature>
<feature type="binding site" description="in other chain" evidence="1">
    <location>
        <begin position="174"/>
        <end position="176"/>
    </location>
    <ligand>
        <name>ATP</name>
        <dbReference type="ChEBI" id="CHEBI:30616"/>
        <note>ligand shared between two neighboring subunits</note>
    </ligand>
</feature>
<feature type="binding site" description="in other chain" evidence="1">
    <location>
        <begin position="247"/>
        <end position="248"/>
    </location>
    <ligand>
        <name>ATP</name>
        <dbReference type="ChEBI" id="CHEBI:30616"/>
        <note>ligand shared between two neighboring subunits</note>
    </ligand>
</feature>
<feature type="binding site" evidence="1">
    <location>
        <position position="256"/>
    </location>
    <ligand>
        <name>ATP</name>
        <dbReference type="ChEBI" id="CHEBI:30616"/>
        <note>ligand shared between two neighboring subunits</note>
    </ligand>
</feature>
<feature type="binding site" evidence="1">
    <location>
        <position position="256"/>
    </location>
    <ligand>
        <name>L-methionine</name>
        <dbReference type="ChEBI" id="CHEBI:57844"/>
        <note>ligand shared between two neighboring subunits</note>
    </ligand>
</feature>
<feature type="binding site" description="in other chain" evidence="1">
    <location>
        <begin position="262"/>
        <end position="263"/>
    </location>
    <ligand>
        <name>ATP</name>
        <dbReference type="ChEBI" id="CHEBI:30616"/>
        <note>ligand shared between two neighboring subunits</note>
    </ligand>
</feature>
<feature type="binding site" evidence="1">
    <location>
        <position position="279"/>
    </location>
    <ligand>
        <name>ATP</name>
        <dbReference type="ChEBI" id="CHEBI:30616"/>
        <note>ligand shared between two neighboring subunits</note>
    </ligand>
</feature>
<feature type="binding site" evidence="1">
    <location>
        <position position="283"/>
    </location>
    <ligand>
        <name>ATP</name>
        <dbReference type="ChEBI" id="CHEBI:30616"/>
        <note>ligand shared between two neighboring subunits</note>
    </ligand>
</feature>
<feature type="binding site" description="in other chain" evidence="1">
    <location>
        <position position="287"/>
    </location>
    <ligand>
        <name>L-methionine</name>
        <dbReference type="ChEBI" id="CHEBI:57844"/>
        <note>ligand shared between two neighboring subunits</note>
    </ligand>
</feature>
<name>METK_STRCO</name>
<proteinExistence type="inferred from homology"/>
<accession>Q9L0Y3</accession>
<dbReference type="EC" id="2.5.1.6" evidence="1"/>
<dbReference type="EMBL" id="AL939109">
    <property type="protein sequence ID" value="CAB76898.1"/>
    <property type="molecule type" value="Genomic_DNA"/>
</dbReference>
<dbReference type="RefSeq" id="NP_625757.1">
    <property type="nucleotide sequence ID" value="NC_003888.3"/>
</dbReference>
<dbReference type="RefSeq" id="WP_003977350.1">
    <property type="nucleotide sequence ID" value="NZ_VNID01000021.1"/>
</dbReference>
<dbReference type="SMR" id="Q9L0Y3"/>
<dbReference type="FunCoup" id="Q9L0Y3">
    <property type="interactions" value="508"/>
</dbReference>
<dbReference type="STRING" id="100226.gene:17759062"/>
<dbReference type="PaxDb" id="100226-SCO1476"/>
<dbReference type="GeneID" id="91387556"/>
<dbReference type="KEGG" id="sco:SCO1476"/>
<dbReference type="PATRIC" id="fig|100226.15.peg.1485"/>
<dbReference type="eggNOG" id="COG0192">
    <property type="taxonomic scope" value="Bacteria"/>
</dbReference>
<dbReference type="HOGENOM" id="CLU_041802_1_1_11"/>
<dbReference type="InParanoid" id="Q9L0Y3"/>
<dbReference type="OrthoDB" id="9801686at2"/>
<dbReference type="PhylomeDB" id="Q9L0Y3"/>
<dbReference type="BRENDA" id="2.5.1.6">
    <property type="organism ID" value="5998"/>
</dbReference>
<dbReference type="UniPathway" id="UPA00315">
    <property type="reaction ID" value="UER00080"/>
</dbReference>
<dbReference type="Proteomes" id="UP000001973">
    <property type="component" value="Chromosome"/>
</dbReference>
<dbReference type="GO" id="GO:0005829">
    <property type="term" value="C:cytosol"/>
    <property type="evidence" value="ECO:0000318"/>
    <property type="project" value="GO_Central"/>
</dbReference>
<dbReference type="GO" id="GO:0005524">
    <property type="term" value="F:ATP binding"/>
    <property type="evidence" value="ECO:0007669"/>
    <property type="project" value="UniProtKB-UniRule"/>
</dbReference>
<dbReference type="GO" id="GO:0000287">
    <property type="term" value="F:magnesium ion binding"/>
    <property type="evidence" value="ECO:0007669"/>
    <property type="project" value="UniProtKB-UniRule"/>
</dbReference>
<dbReference type="GO" id="GO:0004478">
    <property type="term" value="F:methionine adenosyltransferase activity"/>
    <property type="evidence" value="ECO:0000318"/>
    <property type="project" value="GO_Central"/>
</dbReference>
<dbReference type="GO" id="GO:0006730">
    <property type="term" value="P:one-carbon metabolic process"/>
    <property type="evidence" value="ECO:0007669"/>
    <property type="project" value="UniProtKB-KW"/>
</dbReference>
<dbReference type="GO" id="GO:0006556">
    <property type="term" value="P:S-adenosylmethionine biosynthetic process"/>
    <property type="evidence" value="ECO:0000318"/>
    <property type="project" value="GO_Central"/>
</dbReference>
<dbReference type="CDD" id="cd18079">
    <property type="entry name" value="S-AdoMet_synt"/>
    <property type="match status" value="1"/>
</dbReference>
<dbReference type="FunFam" id="3.30.300.10:FF:000006">
    <property type="entry name" value="S-adenosylmethionine synthase"/>
    <property type="match status" value="1"/>
</dbReference>
<dbReference type="Gene3D" id="3.30.300.10">
    <property type="match status" value="3"/>
</dbReference>
<dbReference type="HAMAP" id="MF_00086">
    <property type="entry name" value="S_AdoMet_synth1"/>
    <property type="match status" value="1"/>
</dbReference>
<dbReference type="InterPro" id="IPR022631">
    <property type="entry name" value="ADOMET_SYNTHASE_CS"/>
</dbReference>
<dbReference type="InterPro" id="IPR022630">
    <property type="entry name" value="S-AdoMet_synt_C"/>
</dbReference>
<dbReference type="InterPro" id="IPR022629">
    <property type="entry name" value="S-AdoMet_synt_central"/>
</dbReference>
<dbReference type="InterPro" id="IPR022628">
    <property type="entry name" value="S-AdoMet_synt_N"/>
</dbReference>
<dbReference type="InterPro" id="IPR002133">
    <property type="entry name" value="S-AdoMet_synthetase"/>
</dbReference>
<dbReference type="InterPro" id="IPR022636">
    <property type="entry name" value="S-AdoMet_synthetase_sfam"/>
</dbReference>
<dbReference type="NCBIfam" id="TIGR01034">
    <property type="entry name" value="metK"/>
    <property type="match status" value="1"/>
</dbReference>
<dbReference type="PANTHER" id="PTHR11964">
    <property type="entry name" value="S-ADENOSYLMETHIONINE SYNTHETASE"/>
    <property type="match status" value="1"/>
</dbReference>
<dbReference type="Pfam" id="PF02773">
    <property type="entry name" value="S-AdoMet_synt_C"/>
    <property type="match status" value="1"/>
</dbReference>
<dbReference type="Pfam" id="PF02772">
    <property type="entry name" value="S-AdoMet_synt_M"/>
    <property type="match status" value="1"/>
</dbReference>
<dbReference type="Pfam" id="PF00438">
    <property type="entry name" value="S-AdoMet_synt_N"/>
    <property type="match status" value="1"/>
</dbReference>
<dbReference type="PIRSF" id="PIRSF000497">
    <property type="entry name" value="MAT"/>
    <property type="match status" value="1"/>
</dbReference>
<dbReference type="SUPFAM" id="SSF55973">
    <property type="entry name" value="S-adenosylmethionine synthetase"/>
    <property type="match status" value="3"/>
</dbReference>
<dbReference type="PROSITE" id="PS00376">
    <property type="entry name" value="ADOMET_SYNTHASE_1"/>
    <property type="match status" value="1"/>
</dbReference>
<dbReference type="PROSITE" id="PS00377">
    <property type="entry name" value="ADOMET_SYNTHASE_2"/>
    <property type="match status" value="1"/>
</dbReference>
<organism>
    <name type="scientific">Streptomyces coelicolor (strain ATCC BAA-471 / A3(2) / M145)</name>
    <dbReference type="NCBI Taxonomy" id="100226"/>
    <lineage>
        <taxon>Bacteria</taxon>
        <taxon>Bacillati</taxon>
        <taxon>Actinomycetota</taxon>
        <taxon>Actinomycetes</taxon>
        <taxon>Kitasatosporales</taxon>
        <taxon>Streptomycetaceae</taxon>
        <taxon>Streptomyces</taxon>
        <taxon>Streptomyces albidoflavus group</taxon>
    </lineage>
</organism>
<gene>
    <name evidence="1" type="primary">metK</name>
    <name type="ordered locus">SCO1476</name>
    <name type="ORF">SCL6.33c</name>
</gene>
<protein>
    <recommendedName>
        <fullName evidence="1">S-adenosylmethionine synthase</fullName>
        <shortName evidence="1">AdoMet synthase</shortName>
        <ecNumber evidence="1">2.5.1.6</ecNumber>
    </recommendedName>
    <alternativeName>
        <fullName evidence="1">MAT</fullName>
    </alternativeName>
    <alternativeName>
        <fullName evidence="1">Methionine adenosyltransferase</fullName>
    </alternativeName>
</protein>
<evidence type="ECO:0000255" key="1">
    <source>
        <dbReference type="HAMAP-Rule" id="MF_00086"/>
    </source>
</evidence>
<sequence>MSRRLFTSESVTEGHPDKIADQISDTILDALLREDPTSRVAVETLITTGLVHVAGEVTTKAYADIANLVRGKILEIGYDSSKKGFDGASCGVSVSIGAQSPDIAQGVDTAYENRVEGDEDELDRQGAGDQGLMFGYASDETPTLMPLPVFLAHRLSKRLSEVRKNGTIPYLRPDGKTQVTIEYDGDKAVRLDTVVVSSQHASDIDLESLLAPDIKEFVVEPELKALLEDGIKIDTENYRLLVNPTGRFEIGGPMGDAGLTGRKIIIDTYGGMARHGGGAFSGKDPSKVDRSAAYAMRWVAKNVVAAGLAARCEVQVAYAIGKAEPVGLFVETFGTAKVDTEKIEKAIDEVFDLRPAAIIRALDLLRPIYAQTAAYGHFGRELPDFTWERTDRVDALREAAGL</sequence>
<comment type="function">
    <text evidence="1">Catalyzes the formation of S-adenosylmethionine (AdoMet) from methionine and ATP. The overall synthetic reaction is composed of two sequential steps, AdoMet formation and the subsequent tripolyphosphate hydrolysis which occurs prior to release of AdoMet from the enzyme.</text>
</comment>
<comment type="catalytic activity">
    <reaction evidence="1">
        <text>L-methionine + ATP + H2O = S-adenosyl-L-methionine + phosphate + diphosphate</text>
        <dbReference type="Rhea" id="RHEA:21080"/>
        <dbReference type="ChEBI" id="CHEBI:15377"/>
        <dbReference type="ChEBI" id="CHEBI:30616"/>
        <dbReference type="ChEBI" id="CHEBI:33019"/>
        <dbReference type="ChEBI" id="CHEBI:43474"/>
        <dbReference type="ChEBI" id="CHEBI:57844"/>
        <dbReference type="ChEBI" id="CHEBI:59789"/>
        <dbReference type="EC" id="2.5.1.6"/>
    </reaction>
</comment>
<comment type="cofactor">
    <cofactor evidence="1">
        <name>Mg(2+)</name>
        <dbReference type="ChEBI" id="CHEBI:18420"/>
    </cofactor>
    <text evidence="1">Binds 2 divalent ions per subunit.</text>
</comment>
<comment type="cofactor">
    <cofactor evidence="1">
        <name>K(+)</name>
        <dbReference type="ChEBI" id="CHEBI:29103"/>
    </cofactor>
    <text evidence="1">Binds 1 potassium ion per subunit.</text>
</comment>
<comment type="pathway">
    <text evidence="1">Amino-acid biosynthesis; S-adenosyl-L-methionine biosynthesis; S-adenosyl-L-methionine from L-methionine: step 1/1.</text>
</comment>
<comment type="subunit">
    <text evidence="1">Homotetramer; dimer of dimers.</text>
</comment>
<comment type="subcellular location">
    <subcellularLocation>
        <location evidence="1">Cytoplasm</location>
    </subcellularLocation>
</comment>
<comment type="similarity">
    <text evidence="1">Belongs to the AdoMet synthase family.</text>
</comment>
<keyword id="KW-0067">ATP-binding</keyword>
<keyword id="KW-0963">Cytoplasm</keyword>
<keyword id="KW-0460">Magnesium</keyword>
<keyword id="KW-0479">Metal-binding</keyword>
<keyword id="KW-0547">Nucleotide-binding</keyword>
<keyword id="KW-0554">One-carbon metabolism</keyword>
<keyword id="KW-0630">Potassium</keyword>
<keyword id="KW-1185">Reference proteome</keyword>
<keyword id="KW-0808">Transferase</keyword>